<gene>
    <name evidence="2" type="primary">deoD</name>
    <name type="ordered locus">TTE1752</name>
</gene>
<protein>
    <recommendedName>
        <fullName evidence="2">Purine nucleoside phosphorylase DeoD-type</fullName>
        <shortName evidence="2">PNP</shortName>
        <ecNumber evidence="2">2.4.2.1</ecNumber>
    </recommendedName>
</protein>
<name>DEOD_CALS4</name>
<reference key="1">
    <citation type="journal article" date="2002" name="Genome Res.">
        <title>A complete sequence of the T. tengcongensis genome.</title>
        <authorList>
            <person name="Bao Q."/>
            <person name="Tian Y."/>
            <person name="Li W."/>
            <person name="Xu Z."/>
            <person name="Xuan Z."/>
            <person name="Hu S."/>
            <person name="Dong W."/>
            <person name="Yang J."/>
            <person name="Chen Y."/>
            <person name="Xue Y."/>
            <person name="Xu Y."/>
            <person name="Lai X."/>
            <person name="Huang L."/>
            <person name="Dong X."/>
            <person name="Ma Y."/>
            <person name="Ling L."/>
            <person name="Tan H."/>
            <person name="Chen R."/>
            <person name="Wang J."/>
            <person name="Yu J."/>
            <person name="Yang H."/>
        </authorList>
    </citation>
    <scope>NUCLEOTIDE SEQUENCE [LARGE SCALE GENOMIC DNA]</scope>
    <source>
        <strain>DSM 15242 / JCM 11007 / NBRC 100824 / MB4</strain>
    </source>
</reference>
<keyword id="KW-0328">Glycosyltransferase</keyword>
<keyword id="KW-1185">Reference proteome</keyword>
<keyword id="KW-0808">Transferase</keyword>
<comment type="function">
    <text evidence="2">Catalyzes the reversible phosphorolytic breakdown of the N-glycosidic bond in the beta-(deoxy)ribonucleoside molecules, with the formation of the corresponding free purine bases and pentose-1-phosphate.</text>
</comment>
<comment type="catalytic activity">
    <reaction evidence="2">
        <text>a purine D-ribonucleoside + phosphate = a purine nucleobase + alpha-D-ribose 1-phosphate</text>
        <dbReference type="Rhea" id="RHEA:19805"/>
        <dbReference type="ChEBI" id="CHEBI:26386"/>
        <dbReference type="ChEBI" id="CHEBI:43474"/>
        <dbReference type="ChEBI" id="CHEBI:57720"/>
        <dbReference type="ChEBI" id="CHEBI:142355"/>
        <dbReference type="EC" id="2.4.2.1"/>
    </reaction>
</comment>
<comment type="catalytic activity">
    <reaction evidence="2">
        <text>a purine 2'-deoxy-D-ribonucleoside + phosphate = a purine nucleobase + 2-deoxy-alpha-D-ribose 1-phosphate</text>
        <dbReference type="Rhea" id="RHEA:36431"/>
        <dbReference type="ChEBI" id="CHEBI:26386"/>
        <dbReference type="ChEBI" id="CHEBI:43474"/>
        <dbReference type="ChEBI" id="CHEBI:57259"/>
        <dbReference type="ChEBI" id="CHEBI:142361"/>
        <dbReference type="EC" id="2.4.2.1"/>
    </reaction>
</comment>
<comment type="subunit">
    <text evidence="2">Homohexamer; trimer of homodimers.</text>
</comment>
<comment type="similarity">
    <text evidence="2">Belongs to the PNP/UDP phosphorylase family.</text>
</comment>
<dbReference type="EC" id="2.4.2.1" evidence="2"/>
<dbReference type="EMBL" id="AE008691">
    <property type="protein sequence ID" value="AAM24946.1"/>
    <property type="molecule type" value="Genomic_DNA"/>
</dbReference>
<dbReference type="RefSeq" id="WP_011025948.1">
    <property type="nucleotide sequence ID" value="NC_003869.1"/>
</dbReference>
<dbReference type="SMR" id="Q8R973"/>
<dbReference type="STRING" id="273068.TTE1752"/>
<dbReference type="KEGG" id="tte:TTE1752"/>
<dbReference type="eggNOG" id="COG0813">
    <property type="taxonomic scope" value="Bacteria"/>
</dbReference>
<dbReference type="HOGENOM" id="CLU_068457_2_0_9"/>
<dbReference type="OrthoDB" id="9772602at2"/>
<dbReference type="Proteomes" id="UP000000555">
    <property type="component" value="Chromosome"/>
</dbReference>
<dbReference type="GO" id="GO:0005829">
    <property type="term" value="C:cytosol"/>
    <property type="evidence" value="ECO:0007669"/>
    <property type="project" value="TreeGrafter"/>
</dbReference>
<dbReference type="GO" id="GO:0004731">
    <property type="term" value="F:purine-nucleoside phosphorylase activity"/>
    <property type="evidence" value="ECO:0007669"/>
    <property type="project" value="UniProtKB-UniRule"/>
</dbReference>
<dbReference type="GO" id="GO:0006152">
    <property type="term" value="P:purine nucleoside catabolic process"/>
    <property type="evidence" value="ECO:0007669"/>
    <property type="project" value="TreeGrafter"/>
</dbReference>
<dbReference type="CDD" id="cd09006">
    <property type="entry name" value="PNP_EcPNPI-like"/>
    <property type="match status" value="1"/>
</dbReference>
<dbReference type="Gene3D" id="3.40.50.1580">
    <property type="entry name" value="Nucleoside phosphorylase domain"/>
    <property type="match status" value="1"/>
</dbReference>
<dbReference type="HAMAP" id="MF_01627">
    <property type="entry name" value="Pur_nucleosid_phosp"/>
    <property type="match status" value="1"/>
</dbReference>
<dbReference type="InterPro" id="IPR004402">
    <property type="entry name" value="DeoD-type"/>
</dbReference>
<dbReference type="InterPro" id="IPR018016">
    <property type="entry name" value="Nucleoside_phosphorylase_CS"/>
</dbReference>
<dbReference type="InterPro" id="IPR000845">
    <property type="entry name" value="Nucleoside_phosphorylase_d"/>
</dbReference>
<dbReference type="InterPro" id="IPR035994">
    <property type="entry name" value="Nucleoside_phosphorylase_sf"/>
</dbReference>
<dbReference type="NCBIfam" id="TIGR00107">
    <property type="entry name" value="deoD"/>
    <property type="match status" value="1"/>
</dbReference>
<dbReference type="NCBIfam" id="NF004489">
    <property type="entry name" value="PRK05819.1"/>
    <property type="match status" value="1"/>
</dbReference>
<dbReference type="PANTHER" id="PTHR43691:SF11">
    <property type="entry name" value="FI09636P-RELATED"/>
    <property type="match status" value="1"/>
</dbReference>
<dbReference type="PANTHER" id="PTHR43691">
    <property type="entry name" value="URIDINE PHOSPHORYLASE"/>
    <property type="match status" value="1"/>
</dbReference>
<dbReference type="Pfam" id="PF01048">
    <property type="entry name" value="PNP_UDP_1"/>
    <property type="match status" value="1"/>
</dbReference>
<dbReference type="SUPFAM" id="SSF53167">
    <property type="entry name" value="Purine and uridine phosphorylases"/>
    <property type="match status" value="1"/>
</dbReference>
<dbReference type="PROSITE" id="PS01232">
    <property type="entry name" value="PNP_UDP_1"/>
    <property type="match status" value="1"/>
</dbReference>
<organism>
    <name type="scientific">Caldanaerobacter subterraneus subsp. tengcongensis (strain DSM 15242 / JCM 11007 / NBRC 100824 / MB4)</name>
    <name type="common">Thermoanaerobacter tengcongensis</name>
    <dbReference type="NCBI Taxonomy" id="273068"/>
    <lineage>
        <taxon>Bacteria</taxon>
        <taxon>Bacillati</taxon>
        <taxon>Bacillota</taxon>
        <taxon>Clostridia</taxon>
        <taxon>Thermoanaerobacterales</taxon>
        <taxon>Thermoanaerobacteraceae</taxon>
        <taxon>Caldanaerobacter</taxon>
    </lineage>
</organism>
<accession>Q8R973</accession>
<proteinExistence type="inferred from homology"/>
<sequence>MSIHIGAKEGDIAETVLLPGDPLRAKYIAENLLEDAKCYNEVRGMYGFTGYYKGKRVSVQGTGMGVPSISIYVNELITSYGVKNLIRIGTCGSLQPDIKIRDIVIAMSASTDSAINKIRFNGMDYAPTASFKLLKKAYDKAVEMGIEPKVGNILTTDTFYHDDPESWRLWAKFGVLAVEMETAGLYTLAAKYGVDALTILTVSDSLVTGEATSAEERQKTFMDMVKIALEIA</sequence>
<feature type="chain" id="PRO_0000063167" description="Purine nucleoside phosphorylase DeoD-type">
    <location>
        <begin position="1"/>
        <end position="232"/>
    </location>
</feature>
<feature type="active site" description="Proton donor" evidence="2">
    <location>
        <position position="204"/>
    </location>
</feature>
<feature type="binding site" evidence="1">
    <location>
        <position position="4"/>
    </location>
    <ligand>
        <name>a purine D-ribonucleoside</name>
        <dbReference type="ChEBI" id="CHEBI:142355"/>
        <note>ligand shared between dimeric partners</note>
    </ligand>
</feature>
<feature type="binding site" description="in other chain" evidence="1">
    <location>
        <position position="20"/>
    </location>
    <ligand>
        <name>phosphate</name>
        <dbReference type="ChEBI" id="CHEBI:43474"/>
        <note>ligand shared between dimeric partners</note>
    </ligand>
</feature>
<feature type="binding site" description="in other chain" evidence="1">
    <location>
        <position position="24"/>
    </location>
    <ligand>
        <name>phosphate</name>
        <dbReference type="ChEBI" id="CHEBI:43474"/>
        <note>ligand shared between dimeric partners</note>
    </ligand>
</feature>
<feature type="binding site" evidence="1">
    <location>
        <position position="43"/>
    </location>
    <ligand>
        <name>phosphate</name>
        <dbReference type="ChEBI" id="CHEBI:43474"/>
        <note>ligand shared between dimeric partners</note>
    </ligand>
</feature>
<feature type="binding site" description="in other chain" evidence="1">
    <location>
        <begin position="87"/>
        <end position="90"/>
    </location>
    <ligand>
        <name>phosphate</name>
        <dbReference type="ChEBI" id="CHEBI:43474"/>
        <note>ligand shared between dimeric partners</note>
    </ligand>
</feature>
<feature type="binding site" description="in other chain" evidence="1">
    <location>
        <begin position="179"/>
        <end position="181"/>
    </location>
    <ligand>
        <name>a purine D-ribonucleoside</name>
        <dbReference type="ChEBI" id="CHEBI:142355"/>
        <note>ligand shared between dimeric partners</note>
    </ligand>
</feature>
<feature type="binding site" description="in other chain" evidence="1">
    <location>
        <begin position="203"/>
        <end position="204"/>
    </location>
    <ligand>
        <name>a purine D-ribonucleoside</name>
        <dbReference type="ChEBI" id="CHEBI:142355"/>
        <note>ligand shared between dimeric partners</note>
    </ligand>
</feature>
<feature type="site" description="Important for catalytic activity" evidence="2">
    <location>
        <position position="217"/>
    </location>
</feature>
<evidence type="ECO:0000250" key="1">
    <source>
        <dbReference type="UniProtKB" id="P50389"/>
    </source>
</evidence>
<evidence type="ECO:0000255" key="2">
    <source>
        <dbReference type="HAMAP-Rule" id="MF_01627"/>
    </source>
</evidence>